<reference key="1">
    <citation type="journal article" date="2008" name="Cell. Mol. Life Sci.">
        <title>Common evolution of waprin and Kunitz-like toxin families in Australian venomous snakes.</title>
        <authorList>
            <person name="St Pierre L."/>
            <person name="Earl S.T."/>
            <person name="Filippovich I."/>
            <person name="Sorokina N."/>
            <person name="Masci P.P."/>
            <person name="De Jersey J."/>
            <person name="Lavin M.F."/>
        </authorList>
    </citation>
    <scope>NUCLEOTIDE SEQUENCE [GENOMIC DNA / MRNA]</scope>
    <source>
        <tissue>Venom gland</tissue>
    </source>
</reference>
<dbReference type="EMBL" id="EF990749">
    <property type="protein sequence ID" value="ABV64403.1"/>
    <property type="molecule type" value="mRNA"/>
</dbReference>
<dbReference type="EMBL" id="EU401857">
    <property type="protein sequence ID" value="ACC77806.1"/>
    <property type="molecule type" value="Genomic_DNA"/>
</dbReference>
<dbReference type="SMR" id="B5KL41"/>
<dbReference type="MEROPS" id="I02.052"/>
<dbReference type="GO" id="GO:0005615">
    <property type="term" value="C:extracellular space"/>
    <property type="evidence" value="ECO:0007669"/>
    <property type="project" value="TreeGrafter"/>
</dbReference>
<dbReference type="GO" id="GO:0004867">
    <property type="term" value="F:serine-type endopeptidase inhibitor activity"/>
    <property type="evidence" value="ECO:0007669"/>
    <property type="project" value="UniProtKB-KW"/>
</dbReference>
<dbReference type="CDD" id="cd22594">
    <property type="entry name" value="Kunitz_textilinin-like"/>
    <property type="match status" value="1"/>
</dbReference>
<dbReference type="FunFam" id="4.10.410.10:FF:000004">
    <property type="entry name" value="Tissue factor pathway inhibitor"/>
    <property type="match status" value="1"/>
</dbReference>
<dbReference type="Gene3D" id="4.10.410.10">
    <property type="entry name" value="Pancreatic trypsin inhibitor Kunitz domain"/>
    <property type="match status" value="1"/>
</dbReference>
<dbReference type="InterPro" id="IPR002223">
    <property type="entry name" value="Kunitz_BPTI"/>
</dbReference>
<dbReference type="InterPro" id="IPR036880">
    <property type="entry name" value="Kunitz_BPTI_sf"/>
</dbReference>
<dbReference type="InterPro" id="IPR020901">
    <property type="entry name" value="Prtase_inh_Kunz-CS"/>
</dbReference>
<dbReference type="InterPro" id="IPR050098">
    <property type="entry name" value="TFPI/VKTCI-like"/>
</dbReference>
<dbReference type="PANTHER" id="PTHR10083:SF383">
    <property type="entry name" value="BPTI_KUNITZ INHIBITOR DOMAIN-CONTAINING PROTEIN"/>
    <property type="match status" value="1"/>
</dbReference>
<dbReference type="PANTHER" id="PTHR10083">
    <property type="entry name" value="KUNITZ-TYPE PROTEASE INHIBITOR-RELATED"/>
    <property type="match status" value="1"/>
</dbReference>
<dbReference type="Pfam" id="PF00014">
    <property type="entry name" value="Kunitz_BPTI"/>
    <property type="match status" value="1"/>
</dbReference>
<dbReference type="PRINTS" id="PR00759">
    <property type="entry name" value="BASICPTASE"/>
</dbReference>
<dbReference type="SMART" id="SM00131">
    <property type="entry name" value="KU"/>
    <property type="match status" value="1"/>
</dbReference>
<dbReference type="SUPFAM" id="SSF57362">
    <property type="entry name" value="BPTI-like"/>
    <property type="match status" value="1"/>
</dbReference>
<dbReference type="PROSITE" id="PS00280">
    <property type="entry name" value="BPTI_KUNITZ_1"/>
    <property type="match status" value="1"/>
</dbReference>
<dbReference type="PROSITE" id="PS50279">
    <property type="entry name" value="BPTI_KUNITZ_2"/>
    <property type="match status" value="1"/>
</dbReference>
<accession>B5KL41</accession>
<comment type="function">
    <text evidence="1">Serine protease inhibitor.</text>
</comment>
<comment type="subcellular location">
    <subcellularLocation>
        <location evidence="1">Secreted</location>
    </subcellularLocation>
</comment>
<comment type="tissue specificity">
    <text>Expressed by the venom gland.</text>
</comment>
<comment type="similarity">
    <text evidence="4">Belongs to the venom Kunitz-type family.</text>
</comment>
<organism>
    <name type="scientific">Austrelaps superbus</name>
    <name type="common">Lowland copperhead snake</name>
    <name type="synonym">Hoplocephalus superbus</name>
    <dbReference type="NCBI Taxonomy" id="29156"/>
    <lineage>
        <taxon>Eukaryota</taxon>
        <taxon>Metazoa</taxon>
        <taxon>Chordata</taxon>
        <taxon>Craniata</taxon>
        <taxon>Vertebrata</taxon>
        <taxon>Euteleostomi</taxon>
        <taxon>Lepidosauria</taxon>
        <taxon>Squamata</taxon>
        <taxon>Bifurcata</taxon>
        <taxon>Unidentata</taxon>
        <taxon>Episquamata</taxon>
        <taxon>Toxicofera</taxon>
        <taxon>Serpentes</taxon>
        <taxon>Colubroidea</taxon>
        <taxon>Elapidae</taxon>
        <taxon>Hydrophiinae</taxon>
        <taxon>Austrelaps</taxon>
    </lineage>
</organism>
<feature type="signal peptide" evidence="2">
    <location>
        <begin position="1"/>
        <end position="24"/>
    </location>
</feature>
<feature type="chain" id="PRO_5000395600" description="Kunitz-type serine protease inhibitor superbin-4">
    <location>
        <begin position="25"/>
        <end position="83"/>
    </location>
</feature>
<feature type="domain" description="BPTI/Kunitz inhibitor" evidence="3">
    <location>
        <begin position="31"/>
        <end position="81"/>
    </location>
</feature>
<feature type="site" description="Reactive bond for trypsin" evidence="1">
    <location>
        <begin position="41"/>
        <end position="42"/>
    </location>
</feature>
<feature type="disulfide bond" evidence="3">
    <location>
        <begin position="31"/>
        <end position="81"/>
    </location>
</feature>
<feature type="disulfide bond" evidence="3">
    <location>
        <begin position="40"/>
        <end position="64"/>
    </location>
</feature>
<feature type="disulfide bond" evidence="3">
    <location>
        <begin position="56"/>
        <end position="77"/>
    </location>
</feature>
<name>VKT4_AUSSU</name>
<proteinExistence type="evidence at transcript level"/>
<sequence length="83" mass="9316">MSSGGLLLLLGLLTLWEVLTPVSSKDRPNFCHLPHDTGPCKRNTQAFYYNPVYHTCLKFIYSGCEGNANNFKTIDECKRTCAT</sequence>
<keyword id="KW-1015">Disulfide bond</keyword>
<keyword id="KW-0646">Protease inhibitor</keyword>
<keyword id="KW-0964">Secreted</keyword>
<keyword id="KW-0722">Serine protease inhibitor</keyword>
<keyword id="KW-0732">Signal</keyword>
<evidence type="ECO:0000250" key="1"/>
<evidence type="ECO:0000255" key="2"/>
<evidence type="ECO:0000255" key="3">
    <source>
        <dbReference type="PROSITE-ProRule" id="PRU00031"/>
    </source>
</evidence>
<evidence type="ECO:0000305" key="4"/>
<protein>
    <recommendedName>
        <fullName>Kunitz-type serine protease inhibitor superbin-4</fullName>
    </recommendedName>
    <alternativeName>
        <fullName>Superbinin-4</fullName>
    </alternativeName>
</protein>